<organism>
    <name type="scientific">Marinomonas sp. (strain MWYL1)</name>
    <dbReference type="NCBI Taxonomy" id="400668"/>
    <lineage>
        <taxon>Bacteria</taxon>
        <taxon>Pseudomonadati</taxon>
        <taxon>Pseudomonadota</taxon>
        <taxon>Gammaproteobacteria</taxon>
        <taxon>Oceanospirillales</taxon>
        <taxon>Oceanospirillaceae</taxon>
        <taxon>Marinomonas</taxon>
    </lineage>
</organism>
<proteinExistence type="inferred from homology"/>
<dbReference type="EC" id="2.1.1.181" evidence="1"/>
<dbReference type="EMBL" id="CP000749">
    <property type="protein sequence ID" value="ABR72958.1"/>
    <property type="molecule type" value="Genomic_DNA"/>
</dbReference>
<dbReference type="SMR" id="A6W2M9"/>
<dbReference type="STRING" id="400668.Mmwyl1_4062"/>
<dbReference type="KEGG" id="mmw:Mmwyl1_4062"/>
<dbReference type="eggNOG" id="COG3129">
    <property type="taxonomic scope" value="Bacteria"/>
</dbReference>
<dbReference type="HOGENOM" id="CLU_027534_3_0_6"/>
<dbReference type="OrthoDB" id="1115728at2"/>
<dbReference type="GO" id="GO:0005737">
    <property type="term" value="C:cytoplasm"/>
    <property type="evidence" value="ECO:0007669"/>
    <property type="project" value="UniProtKB-SubCell"/>
</dbReference>
<dbReference type="GO" id="GO:0052907">
    <property type="term" value="F:23S rRNA (adenine(1618)-N(6))-methyltransferase activity"/>
    <property type="evidence" value="ECO:0007669"/>
    <property type="project" value="UniProtKB-EC"/>
</dbReference>
<dbReference type="GO" id="GO:0070475">
    <property type="term" value="P:rRNA base methylation"/>
    <property type="evidence" value="ECO:0007669"/>
    <property type="project" value="TreeGrafter"/>
</dbReference>
<dbReference type="CDD" id="cd02440">
    <property type="entry name" value="AdoMet_MTases"/>
    <property type="match status" value="1"/>
</dbReference>
<dbReference type="Gene3D" id="3.40.50.150">
    <property type="entry name" value="Vaccinia Virus protein VP39"/>
    <property type="match status" value="1"/>
</dbReference>
<dbReference type="HAMAP" id="MF_01848">
    <property type="entry name" value="23SrRNA_methyltr_F"/>
    <property type="match status" value="1"/>
</dbReference>
<dbReference type="InterPro" id="IPR010286">
    <property type="entry name" value="METTL16/RlmF"/>
</dbReference>
<dbReference type="InterPro" id="IPR016909">
    <property type="entry name" value="rRNA_lsu_MeTfrase_F"/>
</dbReference>
<dbReference type="InterPro" id="IPR029063">
    <property type="entry name" value="SAM-dependent_MTases_sf"/>
</dbReference>
<dbReference type="NCBIfam" id="NF008725">
    <property type="entry name" value="PRK11727.1"/>
    <property type="match status" value="1"/>
</dbReference>
<dbReference type="PANTHER" id="PTHR13393:SF0">
    <property type="entry name" value="RNA N6-ADENOSINE-METHYLTRANSFERASE METTL16"/>
    <property type="match status" value="1"/>
</dbReference>
<dbReference type="PANTHER" id="PTHR13393">
    <property type="entry name" value="SAM-DEPENDENT METHYLTRANSFERASE"/>
    <property type="match status" value="1"/>
</dbReference>
<dbReference type="Pfam" id="PF05971">
    <property type="entry name" value="Methyltransf_10"/>
    <property type="match status" value="1"/>
</dbReference>
<dbReference type="PIRSF" id="PIRSF029038">
    <property type="entry name" value="Mtase_YbiN_prd"/>
    <property type="match status" value="1"/>
</dbReference>
<dbReference type="SUPFAM" id="SSF53335">
    <property type="entry name" value="S-adenosyl-L-methionine-dependent methyltransferases"/>
    <property type="match status" value="1"/>
</dbReference>
<protein>
    <recommendedName>
        <fullName evidence="1">Ribosomal RNA large subunit methyltransferase F</fullName>
        <ecNumber evidence="1">2.1.1.181</ecNumber>
    </recommendedName>
    <alternativeName>
        <fullName evidence="1">23S rRNA mA1618 methyltransferase</fullName>
    </alternativeName>
    <alternativeName>
        <fullName evidence="1">rRNA adenine N-6-methyltransferase</fullName>
    </alternativeName>
</protein>
<reference key="1">
    <citation type="submission" date="2007-06" db="EMBL/GenBank/DDBJ databases">
        <title>Complete sequence of Marinomonas sp. MWYL1.</title>
        <authorList>
            <consortium name="US DOE Joint Genome Institute"/>
            <person name="Copeland A."/>
            <person name="Lucas S."/>
            <person name="Lapidus A."/>
            <person name="Barry K."/>
            <person name="Glavina del Rio T."/>
            <person name="Dalin E."/>
            <person name="Tice H."/>
            <person name="Pitluck S."/>
            <person name="Kiss H."/>
            <person name="Brettin T."/>
            <person name="Bruce D."/>
            <person name="Detter J.C."/>
            <person name="Han C."/>
            <person name="Schmutz J."/>
            <person name="Larimer F."/>
            <person name="Land M."/>
            <person name="Hauser L."/>
            <person name="Kyrpides N."/>
            <person name="Kim E."/>
            <person name="Johnston A.W.B."/>
            <person name="Todd J.D."/>
            <person name="Rogers R."/>
            <person name="Wexler M."/>
            <person name="Bond P.L."/>
            <person name="Li Y."/>
            <person name="Richardson P."/>
        </authorList>
    </citation>
    <scope>NUCLEOTIDE SEQUENCE [LARGE SCALE GENOMIC DNA]</scope>
    <source>
        <strain>MWYL1</strain>
    </source>
</reference>
<feature type="chain" id="PRO_0000349920" description="Ribosomal RNA large subunit methyltransferase F">
    <location>
        <begin position="1"/>
        <end position="327"/>
    </location>
</feature>
<evidence type="ECO:0000255" key="1">
    <source>
        <dbReference type="HAMAP-Rule" id="MF_01848"/>
    </source>
</evidence>
<keyword id="KW-0963">Cytoplasm</keyword>
<keyword id="KW-0489">Methyltransferase</keyword>
<keyword id="KW-0698">rRNA processing</keyword>
<keyword id="KW-0949">S-adenosyl-L-methionine</keyword>
<keyword id="KW-0808">Transferase</keyword>
<name>RLMF_MARMS</name>
<comment type="function">
    <text evidence="1">Specifically methylates the adenine in position 1618 of 23S rRNA.</text>
</comment>
<comment type="catalytic activity">
    <reaction evidence="1">
        <text>adenosine(1618) in 23S rRNA + S-adenosyl-L-methionine = N(6)-methyladenosine(1618) in 23S rRNA + S-adenosyl-L-homocysteine + H(+)</text>
        <dbReference type="Rhea" id="RHEA:16497"/>
        <dbReference type="Rhea" id="RHEA-COMP:10229"/>
        <dbReference type="Rhea" id="RHEA-COMP:10231"/>
        <dbReference type="ChEBI" id="CHEBI:15378"/>
        <dbReference type="ChEBI" id="CHEBI:57856"/>
        <dbReference type="ChEBI" id="CHEBI:59789"/>
        <dbReference type="ChEBI" id="CHEBI:74411"/>
        <dbReference type="ChEBI" id="CHEBI:74449"/>
        <dbReference type="EC" id="2.1.1.181"/>
    </reaction>
</comment>
<comment type="subcellular location">
    <subcellularLocation>
        <location evidence="1">Cytoplasm</location>
    </subcellularLocation>
</comment>
<comment type="similarity">
    <text evidence="1">Belongs to the methyltransferase superfamily. METTL16/RlmF family.</text>
</comment>
<sequence>MVLKSKNTKSKRTNKLELHPRNPHRARYDFALLADSCPELSGFIQLNQYGNESVDFANPNAVKTLNRALLNHFYGVAFWDIPPGYLCPPIPGRADYIHYLADLLAASNLGVIPRGKGVKVLDVGVGANCVYPIIGHQEYGWQFVGSDVNPVAVATCDTIVKSNPCLKGAISARLQTQSAKLFDGVWKEKDRFDLTLCNPPFHTSESAMIDESQRKWRGVKGKKTTTQKPVLNFGGTAAELWCDGGEAGFVSRMVKESVQYADRCFWFTSLVARQGNLDAIYRTLKDVGARQVKTIEMAQGQKISRFVAWSFLGDDQIDYWKDNYWQN</sequence>
<gene>
    <name evidence="1" type="primary">rlmF</name>
    <name type="ordered locus">Mmwyl1_4062</name>
</gene>
<accession>A6W2M9</accession>